<feature type="chain" id="PRO_0000299401" description="Nurim">
    <location>
        <begin position="1"/>
        <end position="275"/>
    </location>
</feature>
<feature type="topological domain" description="Nuclear" evidence="2">
    <location>
        <begin position="1"/>
        <end position="4"/>
    </location>
</feature>
<feature type="transmembrane region" description="Helical" evidence="2">
    <location>
        <begin position="5"/>
        <end position="32"/>
    </location>
</feature>
<feature type="topological domain" description="Perinuclear space" evidence="2">
    <location>
        <begin position="33"/>
        <end position="63"/>
    </location>
</feature>
<feature type="transmembrane region" description="Helical" evidence="2">
    <location>
        <begin position="64"/>
        <end position="85"/>
    </location>
</feature>
<feature type="topological domain" description="Nuclear" evidence="2">
    <location>
        <begin position="86"/>
        <end position="102"/>
    </location>
</feature>
<feature type="transmembrane region" description="Helical" evidence="2">
    <location>
        <begin position="103"/>
        <end position="119"/>
    </location>
</feature>
<feature type="topological domain" description="Perinuclear space" evidence="2">
    <location>
        <begin position="120"/>
        <end position="138"/>
    </location>
</feature>
<feature type="transmembrane region" description="Helical" evidence="2">
    <location>
        <begin position="139"/>
        <end position="169"/>
    </location>
</feature>
<feature type="topological domain" description="Nuclear" evidence="2">
    <location>
        <begin position="170"/>
        <end position="196"/>
    </location>
</feature>
<feature type="transmembrane region" description="Helical" evidence="2">
    <location>
        <begin position="197"/>
        <end position="215"/>
    </location>
</feature>
<feature type="topological domain" description="Perinuclear space" evidence="2">
    <location>
        <begin position="216"/>
        <end position="221"/>
    </location>
</feature>
<feature type="transmembrane region" description="Helical" evidence="2">
    <location>
        <begin position="222"/>
        <end position="239"/>
    </location>
</feature>
<feature type="topological domain" description="Nuclear" evidence="2">
    <location>
        <begin position="240"/>
        <end position="275"/>
    </location>
</feature>
<name>NRM_DANRE</name>
<organism>
    <name type="scientific">Danio rerio</name>
    <name type="common">Zebrafish</name>
    <name type="synonym">Brachydanio rerio</name>
    <dbReference type="NCBI Taxonomy" id="7955"/>
    <lineage>
        <taxon>Eukaryota</taxon>
        <taxon>Metazoa</taxon>
        <taxon>Chordata</taxon>
        <taxon>Craniata</taxon>
        <taxon>Vertebrata</taxon>
        <taxon>Euteleostomi</taxon>
        <taxon>Actinopterygii</taxon>
        <taxon>Neopterygii</taxon>
        <taxon>Teleostei</taxon>
        <taxon>Ostariophysi</taxon>
        <taxon>Cypriniformes</taxon>
        <taxon>Danionidae</taxon>
        <taxon>Danioninae</taxon>
        <taxon>Danio</taxon>
    </lineage>
</organism>
<protein>
    <recommendedName>
        <fullName>Nurim</fullName>
    </recommendedName>
    <alternativeName>
        <fullName>Nuclear envelope membrane protein</fullName>
    </alternativeName>
    <alternativeName>
        <fullName>Nuclear rim protein</fullName>
    </alternativeName>
</protein>
<sequence length="275" mass="31181">MASVTFRDGFLCVSALITFVFVFVTGADFVRFVSFRAINHNLSGAAPLCRDSVPWSVALRDGVVQKAVAVDVLLLVVFSLQHSLLAWTPVKRVCQSVFGVLSRSVYCFTTAAALQILMHYWRPVTSAPCLWSVSSAPWEIWFPLICFIVHFLCWAIICSILLIFDYPELLGIKQVYYECLGLGDPLLLKSERAQRLYSHLRHPVCVELLTVLWLLPSFPLDRLLLAVFLTVYLILAHSLDKQDCAYLRHQLRNKLQLFSTPLEGSEQTNDNNKLE</sequence>
<evidence type="ECO:0000250" key="1"/>
<evidence type="ECO:0000255" key="2"/>
<evidence type="ECO:0000305" key="3"/>
<dbReference type="EMBL" id="CR391989">
    <property type="protein sequence ID" value="CAK10878.1"/>
    <property type="molecule type" value="Genomic_DNA"/>
</dbReference>
<dbReference type="RefSeq" id="NP_001038660.1">
    <property type="nucleotide sequence ID" value="NM_001045195.1"/>
</dbReference>
<dbReference type="FunCoup" id="Q1L911">
    <property type="interactions" value="1058"/>
</dbReference>
<dbReference type="STRING" id="7955.ENSDARP00000087736"/>
<dbReference type="PaxDb" id="7955-ENSDARP00000087736"/>
<dbReference type="Ensembl" id="ENSDART00000093304">
    <property type="protein sequence ID" value="ENSDARP00000087736"/>
    <property type="gene ID" value="ENSDARG00000063690"/>
</dbReference>
<dbReference type="GeneID" id="570027"/>
<dbReference type="KEGG" id="dre:570027"/>
<dbReference type="AGR" id="ZFIN:ZDB-GENE-060503-445"/>
<dbReference type="CTD" id="11270"/>
<dbReference type="ZFIN" id="ZDB-GENE-060503-445">
    <property type="gene designation" value="nrm"/>
</dbReference>
<dbReference type="eggNOG" id="ENOG502RS62">
    <property type="taxonomic scope" value="Eukaryota"/>
</dbReference>
<dbReference type="HOGENOM" id="CLU_083708_1_0_1"/>
<dbReference type="InParanoid" id="Q1L911"/>
<dbReference type="OMA" id="WSIWFPL"/>
<dbReference type="OrthoDB" id="10050858at2759"/>
<dbReference type="PhylomeDB" id="Q1L911"/>
<dbReference type="TreeFam" id="TF324853"/>
<dbReference type="PRO" id="PR:Q1L911"/>
<dbReference type="Proteomes" id="UP000000437">
    <property type="component" value="Chromosome 19"/>
</dbReference>
<dbReference type="Bgee" id="ENSDARG00000063690">
    <property type="expression patterns" value="Expressed in granulocyte and 18 other cell types or tissues"/>
</dbReference>
<dbReference type="GO" id="GO:0005635">
    <property type="term" value="C:nuclear envelope"/>
    <property type="evidence" value="ECO:0000250"/>
    <property type="project" value="UniProtKB"/>
</dbReference>
<dbReference type="GO" id="GO:0005637">
    <property type="term" value="C:nuclear inner membrane"/>
    <property type="evidence" value="ECO:0007669"/>
    <property type="project" value="UniProtKB-SubCell"/>
</dbReference>
<dbReference type="GO" id="GO:0031965">
    <property type="term" value="C:nuclear membrane"/>
    <property type="evidence" value="ECO:0000318"/>
    <property type="project" value="GO_Central"/>
</dbReference>
<dbReference type="InterPro" id="IPR033580">
    <property type="entry name" value="Nurim-like"/>
</dbReference>
<dbReference type="PANTHER" id="PTHR31040">
    <property type="entry name" value="NURIM"/>
    <property type="match status" value="1"/>
</dbReference>
<dbReference type="PANTHER" id="PTHR31040:SF1">
    <property type="entry name" value="NURIM"/>
    <property type="match status" value="1"/>
</dbReference>
<reference key="1">
    <citation type="journal article" date="2013" name="Nature">
        <title>The zebrafish reference genome sequence and its relationship to the human genome.</title>
        <authorList>
            <person name="Howe K."/>
            <person name="Clark M.D."/>
            <person name="Torroja C.F."/>
            <person name="Torrance J."/>
            <person name="Berthelot C."/>
            <person name="Muffato M."/>
            <person name="Collins J.E."/>
            <person name="Humphray S."/>
            <person name="McLaren K."/>
            <person name="Matthews L."/>
            <person name="McLaren S."/>
            <person name="Sealy I."/>
            <person name="Caccamo M."/>
            <person name="Churcher C."/>
            <person name="Scott C."/>
            <person name="Barrett J.C."/>
            <person name="Koch R."/>
            <person name="Rauch G.J."/>
            <person name="White S."/>
            <person name="Chow W."/>
            <person name="Kilian B."/>
            <person name="Quintais L.T."/>
            <person name="Guerra-Assuncao J.A."/>
            <person name="Zhou Y."/>
            <person name="Gu Y."/>
            <person name="Yen J."/>
            <person name="Vogel J.H."/>
            <person name="Eyre T."/>
            <person name="Redmond S."/>
            <person name="Banerjee R."/>
            <person name="Chi J."/>
            <person name="Fu B."/>
            <person name="Langley E."/>
            <person name="Maguire S.F."/>
            <person name="Laird G.K."/>
            <person name="Lloyd D."/>
            <person name="Kenyon E."/>
            <person name="Donaldson S."/>
            <person name="Sehra H."/>
            <person name="Almeida-King J."/>
            <person name="Loveland J."/>
            <person name="Trevanion S."/>
            <person name="Jones M."/>
            <person name="Quail M."/>
            <person name="Willey D."/>
            <person name="Hunt A."/>
            <person name="Burton J."/>
            <person name="Sims S."/>
            <person name="McLay K."/>
            <person name="Plumb B."/>
            <person name="Davis J."/>
            <person name="Clee C."/>
            <person name="Oliver K."/>
            <person name="Clark R."/>
            <person name="Riddle C."/>
            <person name="Elliot D."/>
            <person name="Threadgold G."/>
            <person name="Harden G."/>
            <person name="Ware D."/>
            <person name="Begum S."/>
            <person name="Mortimore B."/>
            <person name="Kerry G."/>
            <person name="Heath P."/>
            <person name="Phillimore B."/>
            <person name="Tracey A."/>
            <person name="Corby N."/>
            <person name="Dunn M."/>
            <person name="Johnson C."/>
            <person name="Wood J."/>
            <person name="Clark S."/>
            <person name="Pelan S."/>
            <person name="Griffiths G."/>
            <person name="Smith M."/>
            <person name="Glithero R."/>
            <person name="Howden P."/>
            <person name="Barker N."/>
            <person name="Lloyd C."/>
            <person name="Stevens C."/>
            <person name="Harley J."/>
            <person name="Holt K."/>
            <person name="Panagiotidis G."/>
            <person name="Lovell J."/>
            <person name="Beasley H."/>
            <person name="Henderson C."/>
            <person name="Gordon D."/>
            <person name="Auger K."/>
            <person name="Wright D."/>
            <person name="Collins J."/>
            <person name="Raisen C."/>
            <person name="Dyer L."/>
            <person name="Leung K."/>
            <person name="Robertson L."/>
            <person name="Ambridge K."/>
            <person name="Leongamornlert D."/>
            <person name="McGuire S."/>
            <person name="Gilderthorp R."/>
            <person name="Griffiths C."/>
            <person name="Manthravadi D."/>
            <person name="Nichol S."/>
            <person name="Barker G."/>
            <person name="Whitehead S."/>
            <person name="Kay M."/>
            <person name="Brown J."/>
            <person name="Murnane C."/>
            <person name="Gray E."/>
            <person name="Humphries M."/>
            <person name="Sycamore N."/>
            <person name="Barker D."/>
            <person name="Saunders D."/>
            <person name="Wallis J."/>
            <person name="Babbage A."/>
            <person name="Hammond S."/>
            <person name="Mashreghi-Mohammadi M."/>
            <person name="Barr L."/>
            <person name="Martin S."/>
            <person name="Wray P."/>
            <person name="Ellington A."/>
            <person name="Matthews N."/>
            <person name="Ellwood M."/>
            <person name="Woodmansey R."/>
            <person name="Clark G."/>
            <person name="Cooper J."/>
            <person name="Tromans A."/>
            <person name="Grafham D."/>
            <person name="Skuce C."/>
            <person name="Pandian R."/>
            <person name="Andrews R."/>
            <person name="Harrison E."/>
            <person name="Kimberley A."/>
            <person name="Garnett J."/>
            <person name="Fosker N."/>
            <person name="Hall R."/>
            <person name="Garner P."/>
            <person name="Kelly D."/>
            <person name="Bird C."/>
            <person name="Palmer S."/>
            <person name="Gehring I."/>
            <person name="Berger A."/>
            <person name="Dooley C.M."/>
            <person name="Ersan-Urun Z."/>
            <person name="Eser C."/>
            <person name="Geiger H."/>
            <person name="Geisler M."/>
            <person name="Karotki L."/>
            <person name="Kirn A."/>
            <person name="Konantz J."/>
            <person name="Konantz M."/>
            <person name="Oberlander M."/>
            <person name="Rudolph-Geiger S."/>
            <person name="Teucke M."/>
            <person name="Lanz C."/>
            <person name="Raddatz G."/>
            <person name="Osoegawa K."/>
            <person name="Zhu B."/>
            <person name="Rapp A."/>
            <person name="Widaa S."/>
            <person name="Langford C."/>
            <person name="Yang F."/>
            <person name="Schuster S.C."/>
            <person name="Carter N.P."/>
            <person name="Harrow J."/>
            <person name="Ning Z."/>
            <person name="Herrero J."/>
            <person name="Searle S.M."/>
            <person name="Enright A."/>
            <person name="Geisler R."/>
            <person name="Plasterk R.H."/>
            <person name="Lee C."/>
            <person name="Westerfield M."/>
            <person name="de Jong P.J."/>
            <person name="Zon L.I."/>
            <person name="Postlethwait J.H."/>
            <person name="Nusslein-Volhard C."/>
            <person name="Hubbard T.J."/>
            <person name="Roest Crollius H."/>
            <person name="Rogers J."/>
            <person name="Stemple D.L."/>
        </authorList>
    </citation>
    <scope>NUCLEOTIDE SEQUENCE [LARGE SCALE GENOMIC DNA]</scope>
    <source>
        <strain>Tuebingen</strain>
    </source>
</reference>
<keyword id="KW-0472">Membrane</keyword>
<keyword id="KW-0539">Nucleus</keyword>
<keyword id="KW-1185">Reference proteome</keyword>
<keyword id="KW-0812">Transmembrane</keyword>
<keyword id="KW-1133">Transmembrane helix</keyword>
<accession>Q1L911</accession>
<proteinExistence type="inferred from homology"/>
<comment type="subcellular location">
    <subcellularLocation>
        <location evidence="1">Nucleus inner membrane</location>
        <topology evidence="1">Multi-pass membrane protein</topology>
    </subcellularLocation>
</comment>
<comment type="similarity">
    <text evidence="3">Belongs to the nurim family.</text>
</comment>
<gene>
    <name type="primary">nrm</name>
    <name type="ORF">si:dkey-263h23.2</name>
</gene>